<comment type="function">
    <text evidence="1">Associates with the EF-Tu.GDP complex and induces the exchange of GDP to GTP. It remains bound to the aminoacyl-tRNA.EF-Tu.GTP complex up to the GTP hydrolysis stage on the ribosome.</text>
</comment>
<comment type="subcellular location">
    <subcellularLocation>
        <location evidence="1">Cytoplasm</location>
    </subcellularLocation>
</comment>
<comment type="similarity">
    <text evidence="1">Belongs to the EF-Ts family.</text>
</comment>
<protein>
    <recommendedName>
        <fullName evidence="1">Elongation factor Ts</fullName>
        <shortName evidence="1">EF-Ts</shortName>
    </recommendedName>
</protein>
<evidence type="ECO:0000255" key="1">
    <source>
        <dbReference type="HAMAP-Rule" id="MF_00050"/>
    </source>
</evidence>
<accession>Q7MAK1</accession>
<name>EFTS_WOLSU</name>
<feature type="chain" id="PRO_0000161235" description="Elongation factor Ts">
    <location>
        <begin position="1"/>
        <end position="355"/>
    </location>
</feature>
<feature type="region of interest" description="Involved in Mg(2+) ion dislocation from EF-Tu" evidence="1">
    <location>
        <begin position="82"/>
        <end position="85"/>
    </location>
</feature>
<keyword id="KW-0963">Cytoplasm</keyword>
<keyword id="KW-0251">Elongation factor</keyword>
<keyword id="KW-0648">Protein biosynthesis</keyword>
<keyword id="KW-1185">Reference proteome</keyword>
<sequence length="355" mass="39525">MAEITAQLVKQLREMTDAGMMDCKKALVETDGDIEKAVEYLREKGLSKAAKKADRVASEGVVSVEVASDFSKASLLEINSETDFVAKNEQFKELVAKTSKLVHDHALSSTETLHTVSVDGMEFSEYLQQNIAKIGENIVVRRIVTLETKRGAIVNGYVHSNGRVGVLIGIKFGKEGSKSACVELARNLCMHAAAMKPQVLSYEELDPEFITKEKVALIAELEKENEELKRLGKPLHRIPEYISRSELTPSVLKNQEQKLREELKAQGKPEAIWDKIVPGQLERFIADSTLIDQRLTLLGQFYVMDDKKTIAQVLEAKGKELDDSIEIVDYVRFELGEGIEKKACNFAEEVAAQLG</sequence>
<proteinExistence type="inferred from homology"/>
<gene>
    <name evidence="1" type="primary">tsf</name>
    <name type="ordered locus">WS0193</name>
</gene>
<reference key="1">
    <citation type="journal article" date="2003" name="Proc. Natl. Acad. Sci. U.S.A.">
        <title>Complete genome sequence and analysis of Wolinella succinogenes.</title>
        <authorList>
            <person name="Baar C."/>
            <person name="Eppinger M."/>
            <person name="Raddatz G."/>
            <person name="Simon J."/>
            <person name="Lanz C."/>
            <person name="Klimmek O."/>
            <person name="Nandakumar R."/>
            <person name="Gross R."/>
            <person name="Rosinus A."/>
            <person name="Keller H."/>
            <person name="Jagtap P."/>
            <person name="Linke B."/>
            <person name="Meyer F."/>
            <person name="Lederer H."/>
            <person name="Schuster S.C."/>
        </authorList>
    </citation>
    <scope>NUCLEOTIDE SEQUENCE [LARGE SCALE GENOMIC DNA]</scope>
    <source>
        <strain>ATCC 29543 / DSM 1740 / CCUG 13145 / JCM 31913 / LMG 7466 / NCTC 11488 / FDC 602W</strain>
    </source>
</reference>
<dbReference type="EMBL" id="BX571657">
    <property type="protein sequence ID" value="CAE09354.1"/>
    <property type="molecule type" value="Genomic_DNA"/>
</dbReference>
<dbReference type="RefSeq" id="WP_011138154.1">
    <property type="nucleotide sequence ID" value="NC_005090.1"/>
</dbReference>
<dbReference type="SMR" id="Q7MAK1"/>
<dbReference type="STRING" id="273121.WS0193"/>
<dbReference type="KEGG" id="wsu:WS0193"/>
<dbReference type="eggNOG" id="COG0264">
    <property type="taxonomic scope" value="Bacteria"/>
</dbReference>
<dbReference type="HOGENOM" id="CLU_047155_0_1_7"/>
<dbReference type="Proteomes" id="UP000000422">
    <property type="component" value="Chromosome"/>
</dbReference>
<dbReference type="GO" id="GO:0005737">
    <property type="term" value="C:cytoplasm"/>
    <property type="evidence" value="ECO:0007669"/>
    <property type="project" value="UniProtKB-SubCell"/>
</dbReference>
<dbReference type="GO" id="GO:0003746">
    <property type="term" value="F:translation elongation factor activity"/>
    <property type="evidence" value="ECO:0007669"/>
    <property type="project" value="UniProtKB-UniRule"/>
</dbReference>
<dbReference type="CDD" id="cd14275">
    <property type="entry name" value="UBA_EF-Ts"/>
    <property type="match status" value="1"/>
</dbReference>
<dbReference type="FunFam" id="1.10.8.10:FF:000001">
    <property type="entry name" value="Elongation factor Ts"/>
    <property type="match status" value="1"/>
</dbReference>
<dbReference type="Gene3D" id="1.10.286.20">
    <property type="match status" value="1"/>
</dbReference>
<dbReference type="Gene3D" id="1.10.8.10">
    <property type="entry name" value="DNA helicase RuvA subunit, C-terminal domain"/>
    <property type="match status" value="1"/>
</dbReference>
<dbReference type="Gene3D" id="3.30.479.20">
    <property type="entry name" value="Elongation factor Ts, dimerisation domain"/>
    <property type="match status" value="2"/>
</dbReference>
<dbReference type="HAMAP" id="MF_00050">
    <property type="entry name" value="EF_Ts"/>
    <property type="match status" value="1"/>
</dbReference>
<dbReference type="InterPro" id="IPR036402">
    <property type="entry name" value="EF-Ts_dimer_sf"/>
</dbReference>
<dbReference type="InterPro" id="IPR001816">
    <property type="entry name" value="Transl_elong_EFTs/EF1B"/>
</dbReference>
<dbReference type="InterPro" id="IPR014039">
    <property type="entry name" value="Transl_elong_EFTs/EF1B_dimer"/>
</dbReference>
<dbReference type="InterPro" id="IPR018101">
    <property type="entry name" value="Transl_elong_Ts_CS"/>
</dbReference>
<dbReference type="InterPro" id="IPR009060">
    <property type="entry name" value="UBA-like_sf"/>
</dbReference>
<dbReference type="NCBIfam" id="TIGR00116">
    <property type="entry name" value="tsf"/>
    <property type="match status" value="2"/>
</dbReference>
<dbReference type="PANTHER" id="PTHR11741">
    <property type="entry name" value="ELONGATION FACTOR TS"/>
    <property type="match status" value="1"/>
</dbReference>
<dbReference type="PANTHER" id="PTHR11741:SF0">
    <property type="entry name" value="ELONGATION FACTOR TS, MITOCHONDRIAL"/>
    <property type="match status" value="1"/>
</dbReference>
<dbReference type="Pfam" id="PF00889">
    <property type="entry name" value="EF_TS"/>
    <property type="match status" value="2"/>
</dbReference>
<dbReference type="SUPFAM" id="SSF54713">
    <property type="entry name" value="Elongation factor Ts (EF-Ts), dimerisation domain"/>
    <property type="match status" value="2"/>
</dbReference>
<dbReference type="SUPFAM" id="SSF46934">
    <property type="entry name" value="UBA-like"/>
    <property type="match status" value="1"/>
</dbReference>
<dbReference type="PROSITE" id="PS01126">
    <property type="entry name" value="EF_TS_1"/>
    <property type="match status" value="1"/>
</dbReference>
<dbReference type="PROSITE" id="PS01127">
    <property type="entry name" value="EF_TS_2"/>
    <property type="match status" value="1"/>
</dbReference>
<organism>
    <name type="scientific">Wolinella succinogenes (strain ATCC 29543 / DSM 1740 / CCUG 13145 / JCM 31913 / LMG 7466 / NCTC 11488 / FDC 602W)</name>
    <name type="common">Vibrio succinogenes</name>
    <dbReference type="NCBI Taxonomy" id="273121"/>
    <lineage>
        <taxon>Bacteria</taxon>
        <taxon>Pseudomonadati</taxon>
        <taxon>Campylobacterota</taxon>
        <taxon>Epsilonproteobacteria</taxon>
        <taxon>Campylobacterales</taxon>
        <taxon>Helicobacteraceae</taxon>
        <taxon>Wolinella</taxon>
    </lineage>
</organism>